<sequence>MNEEYDVIVLGTGLTECILSGIMSVNGKKVLHMDRNPYYGGESASITPLEDLYKRFKIPGSPPESMGRGRDWNVDLIPKFLMANGQLVKMLLYTEVTRYLDFKVTEGSFVYKGGKIYKVPSTEAEALASSLMGLFEKRRFRKFLVYVANFDEKDPRTFEGIDPKKTTMRDVYKKFDLGQDVIDFTGHALALYRTDDYLDQPCYETINRIKLYSESLARYGKSPYLYPLYGLGELPQGFARLSAIYGGTYMLNKPIEEIIVQNGKVIGVKSEGEIARCKQLICDPSYVKDRVEKVGQVIRVICILSHPIKNTNDANSCQIIIPQNQVNRKSDIYVCMISFAHNVAAQGKYIAIVSTTVETKEPEKEIRPALELLEPIEQKFVSISDLLVPKDLGTESQIFISRTYDATTHFETTCDDIKNIYKRMTGSEFDFEEMKRKKNDIYGED</sequence>
<gene>
    <name type="primary">GDI2</name>
    <name type="synonym">RABGDIB</name>
</gene>
<comment type="function">
    <text evidence="6">GDP-dissociation inhibitor preventing the GDP to GTP exchange of most Rab proteins. By keeping these small GTPases in their inactive GDP-bound form regulates intracellular membrane trafficking (PubMed:25860027). Negatively regulates protein transport to the cilium and ciliogenesis through the inhibition of RAB8A (PubMed:25860027).</text>
</comment>
<comment type="subunit">
    <text evidence="4 5 6 7 8">Interacts with RHOH (PubMed:11809807). Interacts with the GDP-bound inactive forms of RAB3A, RAB3B, RAB3C, RAB5A, RAB5B, RAB5C, RAB8A, RAB8B, RAB10, RAB12, RAB35, and RAB43; binds RAB3D to a lesser extent (PubMed:19570034, PubMed:25860027, PubMed:26824392, PubMed:29125462). Interacts with DZIP1; this interaction negatively regulates the interaction of GDI2 with GDP-bound RAB8A (PubMed:25860027).</text>
</comment>
<comment type="interaction">
    <interactant intactId="EBI-1049143">
        <id>P50395</id>
    </interactant>
    <interactant intactId="EBI-15666813">
        <id>P62820-1</id>
        <label>RAB1A</label>
    </interactant>
    <organismsDiffer>false</organismsDiffer>
    <experiments>2</experiments>
</comment>
<comment type="interaction">
    <interactant intactId="EBI-1049143">
        <id>P50395</id>
    </interactant>
    <interactant intactId="EBI-3060998">
        <id>Q969Q5</id>
        <label>RAB24</label>
    </interactant>
    <organismsDiffer>false</organismsDiffer>
    <experiments>5</experiments>
</comment>
<comment type="interaction">
    <interactant intactId="EBI-1049143">
        <id>P50395</id>
    </interactant>
    <interactant intactId="EBI-5542466">
        <id>Q8WUD1</id>
        <label>RAB2B</label>
    </interactant>
    <organismsDiffer>false</organismsDiffer>
    <experiments>3</experiments>
</comment>
<comment type="interaction">
    <interactant intactId="EBI-1049143">
        <id>P50395</id>
    </interactant>
    <interactant intactId="EBI-722284">
        <id>P20338</id>
        <label>RAB4A</label>
    </interactant>
    <organismsDiffer>false</organismsDiffer>
    <experiments>6</experiments>
</comment>
<comment type="interaction">
    <interactant intactId="EBI-1049143">
        <id>P50395</id>
    </interactant>
    <interactant intactId="EBI-7089968">
        <id>Q8BMD2</id>
        <label>Dzip1</label>
    </interactant>
    <organismsDiffer>true</organismsDiffer>
    <experiments>2</experiments>
</comment>
<comment type="interaction">
    <interactant intactId="EBI-1049143">
        <id>P50395</id>
    </interactant>
    <interactant intactId="EBI-16153101">
        <id>Q8BMD2-1</id>
        <label>Dzip1</label>
    </interactant>
    <organismsDiffer>true</organismsDiffer>
    <experiments>3</experiments>
</comment>
<comment type="interaction">
    <interactant intactId="EBI-1049143">
        <id>P50395</id>
    </interactant>
    <interactant intactId="EBI-911581">
        <id>P61027</id>
        <label>Rab10</label>
    </interactant>
    <organismsDiffer>true</organismsDiffer>
    <experiments>3</experiments>
</comment>
<comment type="interaction">
    <interactant intactId="EBI-1049143">
        <id>P50395</id>
    </interactant>
    <interactant intactId="EBI-398411">
        <id>P55258</id>
        <label>Rab8a</label>
    </interactant>
    <organismsDiffer>true</organismsDiffer>
    <experiments>3</experiments>
</comment>
<comment type="interaction">
    <interactant intactId="EBI-1049143">
        <id>P50395</id>
    </interactant>
    <interactant intactId="EBI-7473289">
        <id>P61007</id>
        <label>RAB8A</label>
    </interactant>
    <organismsDiffer>true</organismsDiffer>
    <experiments>2</experiments>
</comment>
<comment type="subcellular location">
    <subcellularLocation>
        <location evidence="1">Cytoplasm</location>
    </subcellularLocation>
    <subcellularLocation>
        <location evidence="1">Membrane</location>
        <topology evidence="1">Peripheral membrane protein</topology>
    </subcellularLocation>
    <subcellularLocation>
        <location evidence="5">Golgi apparatus</location>
        <location evidence="5">trans-Golgi network</location>
    </subcellularLocation>
</comment>
<comment type="alternative products">
    <event type="alternative splicing"/>
    <isoform>
        <id>P50395-1</id>
        <name>1</name>
        <sequence type="displayed"/>
    </isoform>
    <isoform>
        <id>P50395-2</id>
        <name>2</name>
        <sequence type="described" ref="VSP_043469"/>
    </isoform>
</comment>
<comment type="tissue specificity">
    <text evidence="9">Ubiquitous.</text>
</comment>
<comment type="similarity">
    <text evidence="11">Belongs to the Rab GDI family.</text>
</comment>
<protein>
    <recommendedName>
        <fullName>Rab GDP dissociation inhibitor beta</fullName>
        <shortName>Rab GDI beta</shortName>
    </recommendedName>
    <alternativeName>
        <fullName>Guanosine diphosphate dissociation inhibitor 2</fullName>
        <shortName>GDI-2</shortName>
    </alternativeName>
</protein>
<feature type="chain" id="PRO_0000056679" description="Rab GDP dissociation inhibitor beta">
    <location>
        <begin position="1"/>
        <end position="445"/>
    </location>
</feature>
<feature type="modified residue" description="N-acetylmethionine" evidence="13">
    <location>
        <position position="1"/>
    </location>
</feature>
<feature type="modified residue" description="N6-succinyllysine" evidence="3">
    <location>
        <position position="57"/>
    </location>
</feature>
<feature type="modified residue" description="Phosphoserine" evidence="12 15 16">
    <location>
        <position position="61"/>
    </location>
</feature>
<feature type="modified residue" description="N6-acetyllysine" evidence="14">
    <location>
        <position position="112"/>
    </location>
</feature>
<feature type="modified residue" description="Phosphoserine" evidence="2">
    <location>
        <position position="130"/>
    </location>
</feature>
<feature type="modified residue" description="N6-acetyllysine" evidence="14">
    <location>
        <position position="269"/>
    </location>
</feature>
<feature type="modified residue" description="Phosphoserine" evidence="17">
    <location>
        <position position="382"/>
    </location>
</feature>
<feature type="splice variant" id="VSP_043469" description="In isoform 2." evidence="10">
    <location>
        <begin position="86"/>
        <end position="130"/>
    </location>
</feature>
<feature type="sequence conflict" description="In Ref. 1; BAA03095." evidence="11" ref="1">
    <original>N</original>
    <variation>D</variation>
    <location>
        <position position="2"/>
    </location>
</feature>
<name>GDIB_HUMAN</name>
<keyword id="KW-0007">Acetylation</keyword>
<keyword id="KW-0025">Alternative splicing</keyword>
<keyword id="KW-0963">Cytoplasm</keyword>
<keyword id="KW-0333">Golgi apparatus</keyword>
<keyword id="KW-0343">GTPase activation</keyword>
<keyword id="KW-0472">Membrane</keyword>
<keyword id="KW-0597">Phosphoprotein</keyword>
<keyword id="KW-1267">Proteomics identification</keyword>
<keyword id="KW-1185">Reference proteome</keyword>
<reference key="1">
    <citation type="submission" date="1993-04" db="EMBL/GenBank/DDBJ databases">
        <authorList>
            <person name="Asada M."/>
            <person name="Kaibuchi K."/>
            <person name="Takai Y."/>
        </authorList>
    </citation>
    <scope>NUCLEOTIDE SEQUENCE [MRNA] (ISOFORM 1)</scope>
    <source>
        <tissue>Brain</tissue>
    </source>
</reference>
<reference key="2">
    <citation type="journal article" date="1998" name="Mamm. Genome">
        <title>The human rab GDI beta gene with long retroposon-rich introns maps to 10p15 and its pseudogene to 7p11-p13.</title>
        <authorList>
            <person name="Sedlacek Z."/>
            <person name="Munstermann E."/>
            <person name="Mincheva A."/>
            <person name="Lichter P."/>
            <person name="Poutska A."/>
        </authorList>
    </citation>
    <scope>NUCLEOTIDE SEQUENCE [GENOMIC DNA / MRNA] (ISOFORM 1)</scope>
</reference>
<reference key="3">
    <citation type="submission" date="2003-05" db="EMBL/GenBank/DDBJ databases">
        <title>Cloning of human full-length CDSs in BD Creator(TM) system donor vector.</title>
        <authorList>
            <person name="Kalnine N."/>
            <person name="Chen X."/>
            <person name="Rolfs A."/>
            <person name="Halleck A."/>
            <person name="Hines L."/>
            <person name="Eisenstein S."/>
            <person name="Koundinya M."/>
            <person name="Raphael J."/>
            <person name="Moreira D."/>
            <person name="Kelley T."/>
            <person name="LaBaer J."/>
            <person name="Lin Y."/>
            <person name="Phelan M."/>
            <person name="Farmer A."/>
        </authorList>
    </citation>
    <scope>NUCLEOTIDE SEQUENCE [LARGE SCALE MRNA] (ISOFORM 1)</scope>
</reference>
<reference key="4">
    <citation type="journal article" date="2004" name="Nat. Genet.">
        <title>Complete sequencing and characterization of 21,243 full-length human cDNAs.</title>
        <authorList>
            <person name="Ota T."/>
            <person name="Suzuki Y."/>
            <person name="Nishikawa T."/>
            <person name="Otsuki T."/>
            <person name="Sugiyama T."/>
            <person name="Irie R."/>
            <person name="Wakamatsu A."/>
            <person name="Hayashi K."/>
            <person name="Sato H."/>
            <person name="Nagai K."/>
            <person name="Kimura K."/>
            <person name="Makita H."/>
            <person name="Sekine M."/>
            <person name="Obayashi M."/>
            <person name="Nishi T."/>
            <person name="Shibahara T."/>
            <person name="Tanaka T."/>
            <person name="Ishii S."/>
            <person name="Yamamoto J."/>
            <person name="Saito K."/>
            <person name="Kawai Y."/>
            <person name="Isono Y."/>
            <person name="Nakamura Y."/>
            <person name="Nagahari K."/>
            <person name="Murakami K."/>
            <person name="Yasuda T."/>
            <person name="Iwayanagi T."/>
            <person name="Wagatsuma M."/>
            <person name="Shiratori A."/>
            <person name="Sudo H."/>
            <person name="Hosoiri T."/>
            <person name="Kaku Y."/>
            <person name="Kodaira H."/>
            <person name="Kondo H."/>
            <person name="Sugawara M."/>
            <person name="Takahashi M."/>
            <person name="Kanda K."/>
            <person name="Yokoi T."/>
            <person name="Furuya T."/>
            <person name="Kikkawa E."/>
            <person name="Omura Y."/>
            <person name="Abe K."/>
            <person name="Kamihara K."/>
            <person name="Katsuta N."/>
            <person name="Sato K."/>
            <person name="Tanikawa M."/>
            <person name="Yamazaki M."/>
            <person name="Ninomiya K."/>
            <person name="Ishibashi T."/>
            <person name="Yamashita H."/>
            <person name="Murakawa K."/>
            <person name="Fujimori K."/>
            <person name="Tanai H."/>
            <person name="Kimata M."/>
            <person name="Watanabe M."/>
            <person name="Hiraoka S."/>
            <person name="Chiba Y."/>
            <person name="Ishida S."/>
            <person name="Ono Y."/>
            <person name="Takiguchi S."/>
            <person name="Watanabe S."/>
            <person name="Yosida M."/>
            <person name="Hotuta T."/>
            <person name="Kusano J."/>
            <person name="Kanehori K."/>
            <person name="Takahashi-Fujii A."/>
            <person name="Hara H."/>
            <person name="Tanase T.-O."/>
            <person name="Nomura Y."/>
            <person name="Togiya S."/>
            <person name="Komai F."/>
            <person name="Hara R."/>
            <person name="Takeuchi K."/>
            <person name="Arita M."/>
            <person name="Imose N."/>
            <person name="Musashino K."/>
            <person name="Yuuki H."/>
            <person name="Oshima A."/>
            <person name="Sasaki N."/>
            <person name="Aotsuka S."/>
            <person name="Yoshikawa Y."/>
            <person name="Matsunawa H."/>
            <person name="Ichihara T."/>
            <person name="Shiohata N."/>
            <person name="Sano S."/>
            <person name="Moriya S."/>
            <person name="Momiyama H."/>
            <person name="Satoh N."/>
            <person name="Takami S."/>
            <person name="Terashima Y."/>
            <person name="Suzuki O."/>
            <person name="Nakagawa S."/>
            <person name="Senoh A."/>
            <person name="Mizoguchi H."/>
            <person name="Goto Y."/>
            <person name="Shimizu F."/>
            <person name="Wakebe H."/>
            <person name="Hishigaki H."/>
            <person name="Watanabe T."/>
            <person name="Sugiyama A."/>
            <person name="Takemoto M."/>
            <person name="Kawakami B."/>
            <person name="Yamazaki M."/>
            <person name="Watanabe K."/>
            <person name="Kumagai A."/>
            <person name="Itakura S."/>
            <person name="Fukuzumi Y."/>
            <person name="Fujimori Y."/>
            <person name="Komiyama M."/>
            <person name="Tashiro H."/>
            <person name="Tanigami A."/>
            <person name="Fujiwara T."/>
            <person name="Ono T."/>
            <person name="Yamada K."/>
            <person name="Fujii Y."/>
            <person name="Ozaki K."/>
            <person name="Hirao M."/>
            <person name="Ohmori Y."/>
            <person name="Kawabata A."/>
            <person name="Hikiji T."/>
            <person name="Kobatake N."/>
            <person name="Inagaki H."/>
            <person name="Ikema Y."/>
            <person name="Okamoto S."/>
            <person name="Okitani R."/>
            <person name="Kawakami T."/>
            <person name="Noguchi S."/>
            <person name="Itoh T."/>
            <person name="Shigeta K."/>
            <person name="Senba T."/>
            <person name="Matsumura K."/>
            <person name="Nakajima Y."/>
            <person name="Mizuno T."/>
            <person name="Morinaga M."/>
            <person name="Sasaki M."/>
            <person name="Togashi T."/>
            <person name="Oyama M."/>
            <person name="Hata H."/>
            <person name="Watanabe M."/>
            <person name="Komatsu T."/>
            <person name="Mizushima-Sugano J."/>
            <person name="Satoh T."/>
            <person name="Shirai Y."/>
            <person name="Takahashi Y."/>
            <person name="Nakagawa K."/>
            <person name="Okumura K."/>
            <person name="Nagase T."/>
            <person name="Nomura N."/>
            <person name="Kikuchi H."/>
            <person name="Masuho Y."/>
            <person name="Yamashita R."/>
            <person name="Nakai K."/>
            <person name="Yada T."/>
            <person name="Nakamura Y."/>
            <person name="Ohara O."/>
            <person name="Isogai T."/>
            <person name="Sugano S."/>
        </authorList>
    </citation>
    <scope>NUCLEOTIDE SEQUENCE [LARGE SCALE MRNA] (ISOFORM 2)</scope>
    <source>
        <tissue>Brain</tissue>
    </source>
</reference>
<reference key="5">
    <citation type="journal article" date="2004" name="Nature">
        <title>The DNA sequence and comparative analysis of human chromosome 10.</title>
        <authorList>
            <person name="Deloukas P."/>
            <person name="Earthrowl M.E."/>
            <person name="Grafham D.V."/>
            <person name="Rubenfield M."/>
            <person name="French L."/>
            <person name="Steward C.A."/>
            <person name="Sims S.K."/>
            <person name="Jones M.C."/>
            <person name="Searle S."/>
            <person name="Scott C."/>
            <person name="Howe K."/>
            <person name="Hunt S.E."/>
            <person name="Andrews T.D."/>
            <person name="Gilbert J.G.R."/>
            <person name="Swarbreck D."/>
            <person name="Ashurst J.L."/>
            <person name="Taylor A."/>
            <person name="Battles J."/>
            <person name="Bird C.P."/>
            <person name="Ainscough R."/>
            <person name="Almeida J.P."/>
            <person name="Ashwell R.I.S."/>
            <person name="Ambrose K.D."/>
            <person name="Babbage A.K."/>
            <person name="Bagguley C.L."/>
            <person name="Bailey J."/>
            <person name="Banerjee R."/>
            <person name="Bates K."/>
            <person name="Beasley H."/>
            <person name="Bray-Allen S."/>
            <person name="Brown A.J."/>
            <person name="Brown J.Y."/>
            <person name="Burford D.C."/>
            <person name="Burrill W."/>
            <person name="Burton J."/>
            <person name="Cahill P."/>
            <person name="Camire D."/>
            <person name="Carter N.P."/>
            <person name="Chapman J.C."/>
            <person name="Clark S.Y."/>
            <person name="Clarke G."/>
            <person name="Clee C.M."/>
            <person name="Clegg S."/>
            <person name="Corby N."/>
            <person name="Coulson A."/>
            <person name="Dhami P."/>
            <person name="Dutta I."/>
            <person name="Dunn M."/>
            <person name="Faulkner L."/>
            <person name="Frankish A."/>
            <person name="Frankland J.A."/>
            <person name="Garner P."/>
            <person name="Garnett J."/>
            <person name="Gribble S."/>
            <person name="Griffiths C."/>
            <person name="Grocock R."/>
            <person name="Gustafson E."/>
            <person name="Hammond S."/>
            <person name="Harley J.L."/>
            <person name="Hart E."/>
            <person name="Heath P.D."/>
            <person name="Ho T.P."/>
            <person name="Hopkins B."/>
            <person name="Horne J."/>
            <person name="Howden P.J."/>
            <person name="Huckle E."/>
            <person name="Hynds C."/>
            <person name="Johnson C."/>
            <person name="Johnson D."/>
            <person name="Kana A."/>
            <person name="Kay M."/>
            <person name="Kimberley A.M."/>
            <person name="Kershaw J.K."/>
            <person name="Kokkinaki M."/>
            <person name="Laird G.K."/>
            <person name="Lawlor S."/>
            <person name="Lee H.M."/>
            <person name="Leongamornlert D.A."/>
            <person name="Laird G."/>
            <person name="Lloyd C."/>
            <person name="Lloyd D.M."/>
            <person name="Loveland J."/>
            <person name="Lovell J."/>
            <person name="McLaren S."/>
            <person name="McLay K.E."/>
            <person name="McMurray A."/>
            <person name="Mashreghi-Mohammadi M."/>
            <person name="Matthews L."/>
            <person name="Milne S."/>
            <person name="Nickerson T."/>
            <person name="Nguyen M."/>
            <person name="Overton-Larty E."/>
            <person name="Palmer S.A."/>
            <person name="Pearce A.V."/>
            <person name="Peck A.I."/>
            <person name="Pelan S."/>
            <person name="Phillimore B."/>
            <person name="Porter K."/>
            <person name="Rice C.M."/>
            <person name="Rogosin A."/>
            <person name="Ross M.T."/>
            <person name="Sarafidou T."/>
            <person name="Sehra H.K."/>
            <person name="Shownkeen R."/>
            <person name="Skuce C.D."/>
            <person name="Smith M."/>
            <person name="Standring L."/>
            <person name="Sycamore N."/>
            <person name="Tester J."/>
            <person name="Thorpe A."/>
            <person name="Torcasso W."/>
            <person name="Tracey A."/>
            <person name="Tromans A."/>
            <person name="Tsolas J."/>
            <person name="Wall M."/>
            <person name="Walsh J."/>
            <person name="Wang H."/>
            <person name="Weinstock K."/>
            <person name="West A.P."/>
            <person name="Willey D.L."/>
            <person name="Whitehead S.L."/>
            <person name="Wilming L."/>
            <person name="Wray P.W."/>
            <person name="Young L."/>
            <person name="Chen Y."/>
            <person name="Lovering R.C."/>
            <person name="Moschonas N.K."/>
            <person name="Siebert R."/>
            <person name="Fechtel K."/>
            <person name="Bentley D."/>
            <person name="Durbin R.M."/>
            <person name="Hubbard T."/>
            <person name="Doucette-Stamm L."/>
            <person name="Beck S."/>
            <person name="Smith D.R."/>
            <person name="Rogers J."/>
        </authorList>
    </citation>
    <scope>NUCLEOTIDE SEQUENCE [LARGE SCALE GENOMIC DNA]</scope>
</reference>
<reference key="6">
    <citation type="journal article" date="2004" name="Genome Res.">
        <title>The status, quality, and expansion of the NIH full-length cDNA project: the Mammalian Gene Collection (MGC).</title>
        <authorList>
            <consortium name="The MGC Project Team"/>
        </authorList>
    </citation>
    <scope>NUCLEOTIDE SEQUENCE [LARGE SCALE MRNA] (ISOFORM 1)</scope>
    <source>
        <tissue>Placenta</tissue>
    </source>
</reference>
<reference key="7">
    <citation type="journal article" date="2000" name="J. Cell. Biochem.">
        <title>Impairment of bile salt-dependent lipase secretion in human pancreatic tumoral SOJ-6 cells.</title>
        <authorList>
            <person name="Caillol N."/>
            <person name="Pasqualini E."/>
            <person name="Lloubes R."/>
            <person name="Lombardo D."/>
        </authorList>
    </citation>
    <scope>NUCLEOTIDE SEQUENCE [MRNA] OF 81-439 (ISOFORM 1)</scope>
    <source>
        <tissue>Pancreas</tissue>
    </source>
</reference>
<reference key="8">
    <citation type="journal article" date="1995" name="Hum. Mol. Genet.">
        <title>Expression patterns of two human genes coding for different rab GDP-dissociation inhibitors (GDIs), extremely conserved proteins involved in cellular transport.</title>
        <authorList>
            <person name="Bachner D."/>
            <person name="Sedlacek Z."/>
            <person name="Korn B."/>
            <person name="Hameister H."/>
            <person name="Poustka A."/>
        </authorList>
    </citation>
    <scope>TISSUE SPECIFICITY</scope>
</reference>
<reference key="9">
    <citation type="journal article" date="2002" name="Mol. Cell. Biol.">
        <title>The hematopoiesis-specific GTP-binding protein RhoH is GTPase deficient and modulates activities of other Rho GTPases by an inhibitory function.</title>
        <authorList>
            <person name="Li X."/>
            <person name="Bu X."/>
            <person name="Lu B."/>
            <person name="Avraham H."/>
            <person name="Flavell R.A."/>
            <person name="Lim B."/>
        </authorList>
    </citation>
    <scope>INTERACTION WITH RHOH</scope>
</reference>
<reference key="10">
    <citation type="journal article" date="2008" name="Proc. Natl. Acad. Sci. U.S.A.">
        <title>A quantitative atlas of mitotic phosphorylation.</title>
        <authorList>
            <person name="Dephoure N."/>
            <person name="Zhou C."/>
            <person name="Villen J."/>
            <person name="Beausoleil S.A."/>
            <person name="Bakalarski C.E."/>
            <person name="Elledge S.J."/>
            <person name="Gygi S.P."/>
        </authorList>
    </citation>
    <scope>PHOSPHORYLATION [LARGE SCALE ANALYSIS] AT SER-61</scope>
    <scope>IDENTIFICATION BY MASS SPECTROMETRY [LARGE SCALE ANALYSIS]</scope>
    <source>
        <tissue>Cervix carcinoma</tissue>
    </source>
</reference>
<reference key="11">
    <citation type="journal article" date="2009" name="Anal. Chem.">
        <title>Lys-N and trypsin cover complementary parts of the phosphoproteome in a refined SCX-based approach.</title>
        <authorList>
            <person name="Gauci S."/>
            <person name="Helbig A.O."/>
            <person name="Slijper M."/>
            <person name="Krijgsveld J."/>
            <person name="Heck A.J."/>
            <person name="Mohammed S."/>
        </authorList>
    </citation>
    <scope>ACETYLATION [LARGE SCALE ANALYSIS] AT MET-1</scope>
    <scope>IDENTIFICATION BY MASS SPECTROMETRY [LARGE SCALE ANALYSIS]</scope>
</reference>
<reference key="12">
    <citation type="journal article" date="2009" name="Biochem. J.">
        <title>GDI-1 preferably interacts with Rab10 in insulin-stimulated GLUT4 translocation.</title>
        <authorList>
            <person name="Chen Y."/>
            <person name="Deng Y."/>
            <person name="Zhang J."/>
            <person name="Yang L."/>
            <person name="Xie X."/>
            <person name="Xu T."/>
        </authorList>
    </citation>
    <scope>SUBCELLULAR LOCATION</scope>
    <scope>INTERACTION WITH RAB10</scope>
</reference>
<reference key="13">
    <citation type="journal article" date="2009" name="Science">
        <title>Lysine acetylation targets protein complexes and co-regulates major cellular functions.</title>
        <authorList>
            <person name="Choudhary C."/>
            <person name="Kumar C."/>
            <person name="Gnad F."/>
            <person name="Nielsen M.L."/>
            <person name="Rehman M."/>
            <person name="Walther T.C."/>
            <person name="Olsen J.V."/>
            <person name="Mann M."/>
        </authorList>
    </citation>
    <scope>ACETYLATION [LARGE SCALE ANALYSIS] AT LYS-112 AND LYS-269</scope>
    <scope>IDENTIFICATION BY MASS SPECTROMETRY [LARGE SCALE ANALYSIS]</scope>
</reference>
<reference key="14">
    <citation type="journal article" date="2010" name="Sci. Signal.">
        <title>Quantitative phosphoproteomics reveals widespread full phosphorylation site occupancy during mitosis.</title>
        <authorList>
            <person name="Olsen J.V."/>
            <person name="Vermeulen M."/>
            <person name="Santamaria A."/>
            <person name="Kumar C."/>
            <person name="Miller M.L."/>
            <person name="Jensen L.J."/>
            <person name="Gnad F."/>
            <person name="Cox J."/>
            <person name="Jensen T.S."/>
            <person name="Nigg E.A."/>
            <person name="Brunak S."/>
            <person name="Mann M."/>
        </authorList>
    </citation>
    <scope>PHOSPHORYLATION [LARGE SCALE ANALYSIS] AT SER-61</scope>
    <scope>IDENTIFICATION BY MASS SPECTROMETRY [LARGE SCALE ANALYSIS]</scope>
    <source>
        <tissue>Cervix carcinoma</tissue>
    </source>
</reference>
<reference key="15">
    <citation type="journal article" date="2011" name="BMC Syst. Biol.">
        <title>Initial characterization of the human central proteome.</title>
        <authorList>
            <person name="Burkard T.R."/>
            <person name="Planyavsky M."/>
            <person name="Kaupe I."/>
            <person name="Breitwieser F.P."/>
            <person name="Buerckstuemmer T."/>
            <person name="Bennett K.L."/>
            <person name="Superti-Furga G."/>
            <person name="Colinge J."/>
        </authorList>
    </citation>
    <scope>IDENTIFICATION BY MASS SPECTROMETRY [LARGE SCALE ANALYSIS]</scope>
</reference>
<reference key="16">
    <citation type="journal article" date="2013" name="J. Proteome Res.">
        <title>Toward a comprehensive characterization of a human cancer cell phosphoproteome.</title>
        <authorList>
            <person name="Zhou H."/>
            <person name="Di Palma S."/>
            <person name="Preisinger C."/>
            <person name="Peng M."/>
            <person name="Polat A.N."/>
            <person name="Heck A.J."/>
            <person name="Mohammed S."/>
        </authorList>
    </citation>
    <scope>PHOSPHORYLATION [LARGE SCALE ANALYSIS] AT SER-61</scope>
    <scope>IDENTIFICATION BY MASS SPECTROMETRY [LARGE SCALE ANALYSIS]</scope>
    <source>
        <tissue>Cervix carcinoma</tissue>
        <tissue>Erythroleukemia</tissue>
    </source>
</reference>
<reference key="17">
    <citation type="journal article" date="2014" name="J. Proteomics">
        <title>An enzyme assisted RP-RPLC approach for in-depth analysis of human liver phosphoproteome.</title>
        <authorList>
            <person name="Bian Y."/>
            <person name="Song C."/>
            <person name="Cheng K."/>
            <person name="Dong M."/>
            <person name="Wang F."/>
            <person name="Huang J."/>
            <person name="Sun D."/>
            <person name="Wang L."/>
            <person name="Ye M."/>
            <person name="Zou H."/>
        </authorList>
    </citation>
    <scope>PHOSPHORYLATION [LARGE SCALE ANALYSIS] AT SER-382</scope>
    <scope>IDENTIFICATION BY MASS SPECTROMETRY [LARGE SCALE ANALYSIS]</scope>
    <source>
        <tissue>Liver</tissue>
    </source>
</reference>
<reference key="18">
    <citation type="journal article" date="2015" name="PLoS Biol.">
        <title>GSK3beta-Dzip1-Rab8 cascade regulates ciliogenesis after mitosis.</title>
        <authorList>
            <person name="Zhang B."/>
            <person name="Zhang T."/>
            <person name="Wang G."/>
            <person name="Wang G."/>
            <person name="Chi W."/>
            <person name="Jiang Q."/>
            <person name="Zhang C."/>
        </authorList>
    </citation>
    <scope>FUNCTION</scope>
    <scope>INTERACTION WITH DZIP1 AND RAB8A</scope>
</reference>
<reference key="19">
    <citation type="journal article" date="2015" name="Proteomics">
        <title>N-terminome analysis of the human mitochondrial proteome.</title>
        <authorList>
            <person name="Vaca Jacome A.S."/>
            <person name="Rabilloud T."/>
            <person name="Schaeffer-Reiss C."/>
            <person name="Rompais M."/>
            <person name="Ayoub D."/>
            <person name="Lane L."/>
            <person name="Bairoch A."/>
            <person name="Van Dorsselaer A."/>
            <person name="Carapito C."/>
        </authorList>
    </citation>
    <scope>IDENTIFICATION BY MASS SPECTROMETRY [LARGE SCALE ANALYSIS]</scope>
</reference>
<reference key="20">
    <citation type="journal article" date="2016" name="Elife">
        <title>Phosphoproteomics reveals that Parkinson's disease kinase LRRK2 regulates a subset of Rab GTPases.</title>
        <authorList>
            <person name="Steger M."/>
            <person name="Tonelli F."/>
            <person name="Ito G."/>
            <person name="Davies P."/>
            <person name="Trost M."/>
            <person name="Vetter M."/>
            <person name="Wachter S."/>
            <person name="Lorentzen E."/>
            <person name="Duddy G."/>
            <person name="Wilson S."/>
            <person name="Baptista M.A."/>
            <person name="Fiske B.K."/>
            <person name="Fell M.J."/>
            <person name="Morrow J.A."/>
            <person name="Reith A.D."/>
            <person name="Alessi D.R."/>
            <person name="Mann M."/>
        </authorList>
    </citation>
    <scope>INTERACTION WITH RAB8A; RAB10 AND RAB12</scope>
</reference>
<reference key="21">
    <citation type="journal article" date="2017" name="Elife">
        <title>Systematic proteomic analysis of LRRK2-mediated Rab GTPase phosphorylation establishes a connection to ciliogenesis.</title>
        <authorList>
            <person name="Steger M."/>
            <person name="Diez F."/>
            <person name="Dhekne H.S."/>
            <person name="Lis P."/>
            <person name="Nirujogi R.S."/>
            <person name="Karayel O."/>
            <person name="Tonelli F."/>
            <person name="Martinez T.N."/>
            <person name="Lorentzen E."/>
            <person name="Pfeffer S.R."/>
            <person name="Alessi D.R."/>
            <person name="Mann M."/>
        </authorList>
    </citation>
    <scope>INTERACTION WITH RAB3A; RAB3B; RAB3C; RAB3D; RAB5A; RAB5B; RAB5C; RAB8A; RAB8B; RAB10; RAB12; RAB35 AND RAB43</scope>
</reference>
<dbReference type="EMBL" id="D13988">
    <property type="protein sequence ID" value="BAA03095.1"/>
    <property type="molecule type" value="mRNA"/>
</dbReference>
<dbReference type="EMBL" id="Y13286">
    <property type="protein sequence ID" value="CAA73734.1"/>
    <property type="molecule type" value="mRNA"/>
</dbReference>
<dbReference type="EMBL" id="Y13287">
    <property type="protein sequence ID" value="CAA73735.1"/>
    <property type="molecule type" value="Genomic_DNA"/>
</dbReference>
<dbReference type="EMBL" id="Y13288">
    <property type="protein sequence ID" value="CAA73735.1"/>
    <property type="status" value="JOINED"/>
    <property type="molecule type" value="Genomic_DNA"/>
</dbReference>
<dbReference type="EMBL" id="Y13289">
    <property type="protein sequence ID" value="CAA73735.1"/>
    <property type="status" value="JOINED"/>
    <property type="molecule type" value="Genomic_DNA"/>
</dbReference>
<dbReference type="EMBL" id="Y13290">
    <property type="protein sequence ID" value="CAA73735.1"/>
    <property type="status" value="JOINED"/>
    <property type="molecule type" value="Genomic_DNA"/>
</dbReference>
<dbReference type="EMBL" id="Y13291">
    <property type="protein sequence ID" value="CAA73735.1"/>
    <property type="status" value="JOINED"/>
    <property type="molecule type" value="Genomic_DNA"/>
</dbReference>
<dbReference type="EMBL" id="Y13292">
    <property type="protein sequence ID" value="CAA73735.1"/>
    <property type="status" value="JOINED"/>
    <property type="molecule type" value="Genomic_DNA"/>
</dbReference>
<dbReference type="EMBL" id="Y13293">
    <property type="protein sequence ID" value="CAA73735.1"/>
    <property type="status" value="JOINED"/>
    <property type="molecule type" value="Genomic_DNA"/>
</dbReference>
<dbReference type="EMBL" id="Y13294">
    <property type="protein sequence ID" value="CAA73735.1"/>
    <property type="status" value="JOINED"/>
    <property type="molecule type" value="Genomic_DNA"/>
</dbReference>
<dbReference type="EMBL" id="Y13295">
    <property type="protein sequence ID" value="CAA73735.1"/>
    <property type="status" value="JOINED"/>
    <property type="molecule type" value="Genomic_DNA"/>
</dbReference>
<dbReference type="EMBL" id="Y13296">
    <property type="protein sequence ID" value="CAA73735.1"/>
    <property type="status" value="JOINED"/>
    <property type="molecule type" value="Genomic_DNA"/>
</dbReference>
<dbReference type="EMBL" id="Y13297">
    <property type="protein sequence ID" value="CAA73735.1"/>
    <property type="status" value="JOINED"/>
    <property type="molecule type" value="Genomic_DNA"/>
</dbReference>
<dbReference type="EMBL" id="BT006868">
    <property type="protein sequence ID" value="AAP35514.1"/>
    <property type="molecule type" value="mRNA"/>
</dbReference>
<dbReference type="EMBL" id="AK297554">
    <property type="protein sequence ID" value="BAG59947.1"/>
    <property type="molecule type" value="mRNA"/>
</dbReference>
<dbReference type="EMBL" id="AL596094">
    <property type="status" value="NOT_ANNOTATED_CDS"/>
    <property type="molecule type" value="Genomic_DNA"/>
</dbReference>
<dbReference type="EMBL" id="BC005145">
    <property type="protein sequence ID" value="AAH05145.1"/>
    <property type="molecule type" value="mRNA"/>
</dbReference>
<dbReference type="EMBL" id="AF144713">
    <property type="protein sequence ID" value="AAD34588.1"/>
    <property type="molecule type" value="mRNA"/>
</dbReference>
<dbReference type="CCDS" id="CCDS44352.1">
    <molecule id="P50395-2"/>
</dbReference>
<dbReference type="CCDS" id="CCDS7071.1">
    <molecule id="P50395-1"/>
</dbReference>
<dbReference type="RefSeq" id="NP_001108628.1">
    <molecule id="P50395-2"/>
    <property type="nucleotide sequence ID" value="NM_001115156.2"/>
</dbReference>
<dbReference type="RefSeq" id="NP_001485.2">
    <molecule id="P50395-1"/>
    <property type="nucleotide sequence ID" value="NM_001494.3"/>
</dbReference>
<dbReference type="SMR" id="P50395"/>
<dbReference type="BioGRID" id="108933">
    <property type="interactions" value="200"/>
</dbReference>
<dbReference type="DIP" id="DIP-50593N"/>
<dbReference type="FunCoup" id="P50395">
    <property type="interactions" value="2279"/>
</dbReference>
<dbReference type="IntAct" id="P50395">
    <property type="interactions" value="97"/>
</dbReference>
<dbReference type="MINT" id="P50395"/>
<dbReference type="STRING" id="9606.ENSP00000369538"/>
<dbReference type="GlyGen" id="P50395">
    <property type="glycosylation" value="1 site, 1 O-linked glycan (1 site)"/>
</dbReference>
<dbReference type="iPTMnet" id="P50395"/>
<dbReference type="MetOSite" id="P50395"/>
<dbReference type="PhosphoSitePlus" id="P50395"/>
<dbReference type="SwissPalm" id="P50395"/>
<dbReference type="BioMuta" id="GDI2"/>
<dbReference type="DMDM" id="13638228"/>
<dbReference type="OGP" id="P50395"/>
<dbReference type="REPRODUCTION-2DPAGE" id="IPI00031461"/>
<dbReference type="REPRODUCTION-2DPAGE" id="P50395"/>
<dbReference type="CPTAC" id="CPTAC-512"/>
<dbReference type="CPTAC" id="CPTAC-513"/>
<dbReference type="jPOST" id="P50395"/>
<dbReference type="MassIVE" id="P50395"/>
<dbReference type="PaxDb" id="9606-ENSP00000369538"/>
<dbReference type="PeptideAtlas" id="P50395"/>
<dbReference type="PRIDE" id="P50395"/>
<dbReference type="ProteomicsDB" id="56216">
    <molecule id="P50395-1"/>
</dbReference>
<dbReference type="ProteomicsDB" id="56217">
    <molecule id="P50395-2"/>
</dbReference>
<dbReference type="Pumba" id="P50395"/>
<dbReference type="Antibodypedia" id="10649">
    <property type="antibodies" value="257 antibodies from 28 providers"/>
</dbReference>
<dbReference type="DNASU" id="2665"/>
<dbReference type="Ensembl" id="ENST00000380181.8">
    <molecule id="P50395-2"/>
    <property type="protein sequence ID" value="ENSP00000369528.3"/>
    <property type="gene ID" value="ENSG00000057608.18"/>
</dbReference>
<dbReference type="Ensembl" id="ENST00000380191.9">
    <molecule id="P50395-1"/>
    <property type="protein sequence ID" value="ENSP00000369538.4"/>
    <property type="gene ID" value="ENSG00000057608.18"/>
</dbReference>
<dbReference type="GeneID" id="2665"/>
<dbReference type="KEGG" id="hsa:2665"/>
<dbReference type="MANE-Select" id="ENST00000380191.9">
    <property type="protein sequence ID" value="ENSP00000369538.4"/>
    <property type="RefSeq nucleotide sequence ID" value="NM_001494.4"/>
    <property type="RefSeq protein sequence ID" value="NP_001485.2"/>
</dbReference>
<dbReference type="UCSC" id="uc001iim.5">
    <molecule id="P50395-1"/>
    <property type="organism name" value="human"/>
</dbReference>
<dbReference type="AGR" id="HGNC:4227"/>
<dbReference type="CTD" id="2665"/>
<dbReference type="DisGeNET" id="2665"/>
<dbReference type="GeneCards" id="GDI2"/>
<dbReference type="HGNC" id="HGNC:4227">
    <property type="gene designation" value="GDI2"/>
</dbReference>
<dbReference type="HPA" id="ENSG00000057608">
    <property type="expression patterns" value="Low tissue specificity"/>
</dbReference>
<dbReference type="MIM" id="600767">
    <property type="type" value="gene"/>
</dbReference>
<dbReference type="neXtProt" id="NX_P50395"/>
<dbReference type="OpenTargets" id="ENSG00000057608"/>
<dbReference type="PharmGKB" id="PA28642"/>
<dbReference type="VEuPathDB" id="HostDB:ENSG00000057608"/>
<dbReference type="eggNOG" id="KOG1439">
    <property type="taxonomic scope" value="Eukaryota"/>
</dbReference>
<dbReference type="GeneTree" id="ENSGT00950000182994"/>
<dbReference type="HOGENOM" id="CLU_021695_0_0_1"/>
<dbReference type="InParanoid" id="P50395"/>
<dbReference type="OMA" id="FETKAKM"/>
<dbReference type="OrthoDB" id="9446342at2759"/>
<dbReference type="PAN-GO" id="P50395">
    <property type="GO annotations" value="3 GO annotations based on evolutionary models"/>
</dbReference>
<dbReference type="PhylomeDB" id="P50395"/>
<dbReference type="TreeFam" id="TF300449"/>
<dbReference type="PathwayCommons" id="P50395"/>
<dbReference type="Reactome" id="R-HSA-6798695">
    <property type="pathway name" value="Neutrophil degranulation"/>
</dbReference>
<dbReference type="Reactome" id="R-HSA-8876198">
    <property type="pathway name" value="RAB GEFs exchange GTP for GDP on RABs"/>
</dbReference>
<dbReference type="SignaLink" id="P50395"/>
<dbReference type="BioGRID-ORCS" id="2665">
    <property type="hits" value="73 hits in 1176 CRISPR screens"/>
</dbReference>
<dbReference type="CD-CODE" id="8C2F96ED">
    <property type="entry name" value="Centrosome"/>
</dbReference>
<dbReference type="CD-CODE" id="FB4E32DD">
    <property type="entry name" value="Presynaptic clusters and postsynaptic densities"/>
</dbReference>
<dbReference type="ChiTaRS" id="GDI2">
    <property type="organism name" value="human"/>
</dbReference>
<dbReference type="GeneWiki" id="GDI2"/>
<dbReference type="GenomeRNAi" id="2665"/>
<dbReference type="Pharos" id="P50395">
    <property type="development level" value="Tbio"/>
</dbReference>
<dbReference type="PRO" id="PR:P50395"/>
<dbReference type="Proteomes" id="UP000005640">
    <property type="component" value="Chromosome 10"/>
</dbReference>
<dbReference type="RNAct" id="P50395">
    <property type="molecule type" value="protein"/>
</dbReference>
<dbReference type="Bgee" id="ENSG00000057608">
    <property type="expression patterns" value="Expressed in jejunal mucosa and 210 other cell types or tissues"/>
</dbReference>
<dbReference type="ExpressionAtlas" id="P50395">
    <property type="expression patterns" value="baseline and differential"/>
</dbReference>
<dbReference type="GO" id="GO:0035578">
    <property type="term" value="C:azurophil granule lumen"/>
    <property type="evidence" value="ECO:0000304"/>
    <property type="project" value="Reactome"/>
</dbReference>
<dbReference type="GO" id="GO:0005737">
    <property type="term" value="C:cytoplasm"/>
    <property type="evidence" value="ECO:0000304"/>
    <property type="project" value="UniProtKB"/>
</dbReference>
<dbReference type="GO" id="GO:0005829">
    <property type="term" value="C:cytosol"/>
    <property type="evidence" value="ECO:0000318"/>
    <property type="project" value="GO_Central"/>
</dbReference>
<dbReference type="GO" id="GO:0070062">
    <property type="term" value="C:extracellular exosome"/>
    <property type="evidence" value="ECO:0007005"/>
    <property type="project" value="UniProtKB"/>
</dbReference>
<dbReference type="GO" id="GO:0005576">
    <property type="term" value="C:extracellular region"/>
    <property type="evidence" value="ECO:0000304"/>
    <property type="project" value="Reactome"/>
</dbReference>
<dbReference type="GO" id="GO:0005925">
    <property type="term" value="C:focal adhesion"/>
    <property type="evidence" value="ECO:0007005"/>
    <property type="project" value="UniProtKB"/>
</dbReference>
<dbReference type="GO" id="GO:0005794">
    <property type="term" value="C:Golgi apparatus"/>
    <property type="evidence" value="ECO:0007669"/>
    <property type="project" value="UniProtKB-SubCell"/>
</dbReference>
<dbReference type="GO" id="GO:0016020">
    <property type="term" value="C:membrane"/>
    <property type="evidence" value="ECO:0007669"/>
    <property type="project" value="UniProtKB-SubCell"/>
</dbReference>
<dbReference type="GO" id="GO:0034774">
    <property type="term" value="C:secretory granule lumen"/>
    <property type="evidence" value="ECO:0000304"/>
    <property type="project" value="Reactome"/>
</dbReference>
<dbReference type="GO" id="GO:0045202">
    <property type="term" value="C:synapse"/>
    <property type="evidence" value="ECO:0007669"/>
    <property type="project" value="Ensembl"/>
</dbReference>
<dbReference type="GO" id="GO:0031982">
    <property type="term" value="C:vesicle"/>
    <property type="evidence" value="ECO:0007005"/>
    <property type="project" value="UniProtKB"/>
</dbReference>
<dbReference type="GO" id="GO:0005096">
    <property type="term" value="F:GTPase activator activity"/>
    <property type="evidence" value="ECO:0007669"/>
    <property type="project" value="UniProtKB-KW"/>
</dbReference>
<dbReference type="GO" id="GO:0005093">
    <property type="term" value="F:Rab GDP-dissociation inhibitor activity"/>
    <property type="evidence" value="ECO:0000318"/>
    <property type="project" value="GO_Central"/>
</dbReference>
<dbReference type="GO" id="GO:0003723">
    <property type="term" value="F:RNA binding"/>
    <property type="evidence" value="ECO:0007005"/>
    <property type="project" value="UniProtKB"/>
</dbReference>
<dbReference type="GO" id="GO:0031267">
    <property type="term" value="F:small GTPase binding"/>
    <property type="evidence" value="ECO:0007669"/>
    <property type="project" value="Ensembl"/>
</dbReference>
<dbReference type="GO" id="GO:1902018">
    <property type="term" value="P:negative regulation of cilium assembly"/>
    <property type="evidence" value="ECO:0000315"/>
    <property type="project" value="UniProtKB"/>
</dbReference>
<dbReference type="GO" id="GO:1903565">
    <property type="term" value="P:negative regulation of protein localization to cilium"/>
    <property type="evidence" value="ECO:0000315"/>
    <property type="project" value="UniProtKB"/>
</dbReference>
<dbReference type="GO" id="GO:0015031">
    <property type="term" value="P:protein transport"/>
    <property type="evidence" value="ECO:0007669"/>
    <property type="project" value="InterPro"/>
</dbReference>
<dbReference type="GO" id="GO:0007165">
    <property type="term" value="P:signal transduction"/>
    <property type="evidence" value="ECO:0000304"/>
    <property type="project" value="UniProtKB"/>
</dbReference>
<dbReference type="GO" id="GO:0007264">
    <property type="term" value="P:small GTPase-mediated signal transduction"/>
    <property type="evidence" value="ECO:0007669"/>
    <property type="project" value="Ensembl"/>
</dbReference>
<dbReference type="GO" id="GO:0016192">
    <property type="term" value="P:vesicle-mediated transport"/>
    <property type="evidence" value="ECO:0000318"/>
    <property type="project" value="GO_Central"/>
</dbReference>
<dbReference type="FunFam" id="1.10.405.10:FF:000001">
    <property type="entry name" value="Rab GDP dissociation inhibitor"/>
    <property type="match status" value="1"/>
</dbReference>
<dbReference type="FunFam" id="3.30.519.10:FF:000005">
    <property type="entry name" value="Rab GDP dissociation inhibitor"/>
    <property type="match status" value="1"/>
</dbReference>
<dbReference type="FunFam" id="3.30.519.10:FF:000014">
    <property type="entry name" value="Rab GDP dissociation inhibitor"/>
    <property type="match status" value="1"/>
</dbReference>
<dbReference type="FunFam" id="3.50.50.60:FF:000158">
    <property type="entry name" value="Rab GDP dissociation inhibitor"/>
    <property type="match status" value="1"/>
</dbReference>
<dbReference type="FunFam" id="3.50.50.60:FF:000232">
    <property type="entry name" value="Rab GDP dissociation inhibitor"/>
    <property type="match status" value="1"/>
</dbReference>
<dbReference type="Gene3D" id="3.50.50.60">
    <property type="entry name" value="FAD/NAD(P)-binding domain"/>
    <property type="match status" value="1"/>
</dbReference>
<dbReference type="Gene3D" id="1.10.405.10">
    <property type="entry name" value="Guanine Nucleotide Dissociation Inhibitor, domain 1"/>
    <property type="match status" value="1"/>
</dbReference>
<dbReference type="Gene3D" id="3.30.519.10">
    <property type="entry name" value="Guanine Nucleotide Dissociation Inhibitor, domain 2"/>
    <property type="match status" value="1"/>
</dbReference>
<dbReference type="InterPro" id="IPR036188">
    <property type="entry name" value="FAD/NAD-bd_sf"/>
</dbReference>
<dbReference type="InterPro" id="IPR018203">
    <property type="entry name" value="GDP_dissociation_inhibitor"/>
</dbReference>
<dbReference type="InterPro" id="IPR000806">
    <property type="entry name" value="RabGDI"/>
</dbReference>
<dbReference type="PANTHER" id="PTHR11787:SF1">
    <property type="entry name" value="RAB GDP DISSOCIATION INHIBITOR BETA"/>
    <property type="match status" value="1"/>
</dbReference>
<dbReference type="PANTHER" id="PTHR11787">
    <property type="entry name" value="RAB GDP-DISSOCIATION INHIBITOR"/>
    <property type="match status" value="1"/>
</dbReference>
<dbReference type="Pfam" id="PF00996">
    <property type="entry name" value="GDI"/>
    <property type="match status" value="1"/>
</dbReference>
<dbReference type="PRINTS" id="PR00892">
    <property type="entry name" value="RABGDI"/>
</dbReference>
<dbReference type="PRINTS" id="PR00891">
    <property type="entry name" value="RABGDIREP"/>
</dbReference>
<dbReference type="SUPFAM" id="SSF51905">
    <property type="entry name" value="FAD/NAD(P)-binding domain"/>
    <property type="match status" value="2"/>
</dbReference>
<accession>P50395</accession>
<accession>O43928</accession>
<accession>Q5SX88</accession>
<accession>Q9UQM6</accession>
<proteinExistence type="evidence at protein level"/>
<organism>
    <name type="scientific">Homo sapiens</name>
    <name type="common">Human</name>
    <dbReference type="NCBI Taxonomy" id="9606"/>
    <lineage>
        <taxon>Eukaryota</taxon>
        <taxon>Metazoa</taxon>
        <taxon>Chordata</taxon>
        <taxon>Craniata</taxon>
        <taxon>Vertebrata</taxon>
        <taxon>Euteleostomi</taxon>
        <taxon>Mammalia</taxon>
        <taxon>Eutheria</taxon>
        <taxon>Euarchontoglires</taxon>
        <taxon>Primates</taxon>
        <taxon>Haplorrhini</taxon>
        <taxon>Catarrhini</taxon>
        <taxon>Hominidae</taxon>
        <taxon>Homo</taxon>
    </lineage>
</organism>
<evidence type="ECO:0000250" key="1"/>
<evidence type="ECO:0000250" key="2">
    <source>
        <dbReference type="UniProtKB" id="P50399"/>
    </source>
</evidence>
<evidence type="ECO:0000250" key="3">
    <source>
        <dbReference type="UniProtKB" id="Q61598"/>
    </source>
</evidence>
<evidence type="ECO:0000269" key="4">
    <source>
    </source>
</evidence>
<evidence type="ECO:0000269" key="5">
    <source>
    </source>
</evidence>
<evidence type="ECO:0000269" key="6">
    <source>
    </source>
</evidence>
<evidence type="ECO:0000269" key="7">
    <source>
    </source>
</evidence>
<evidence type="ECO:0000269" key="8">
    <source>
    </source>
</evidence>
<evidence type="ECO:0000269" key="9">
    <source>
    </source>
</evidence>
<evidence type="ECO:0000303" key="10">
    <source>
    </source>
</evidence>
<evidence type="ECO:0000305" key="11"/>
<evidence type="ECO:0007744" key="12">
    <source>
    </source>
</evidence>
<evidence type="ECO:0007744" key="13">
    <source>
    </source>
</evidence>
<evidence type="ECO:0007744" key="14">
    <source>
    </source>
</evidence>
<evidence type="ECO:0007744" key="15">
    <source>
    </source>
</evidence>
<evidence type="ECO:0007744" key="16">
    <source>
    </source>
</evidence>
<evidence type="ECO:0007744" key="17">
    <source>
    </source>
</evidence>